<feature type="chain" id="PRO_0000148779" description="Aspartyl/glutamyl-tRNA(Asn/Gln) amidotransferase subunit B">
    <location>
        <begin position="1"/>
        <end position="488"/>
    </location>
</feature>
<name>GATB_CHLTR</name>
<comment type="function">
    <text evidence="1">Allows the formation of correctly charged Asn-tRNA(Asn) or Gln-tRNA(Gln) through the transamidation of misacylated Asp-tRNA(Asn) or Glu-tRNA(Gln) in organisms which lack either or both of asparaginyl-tRNA or glutaminyl-tRNA synthetases. The reaction takes place in the presence of glutamine and ATP through an activated phospho-Asp-tRNA(Asn) or phospho-Glu-tRNA(Gln) (By similarity).</text>
</comment>
<comment type="catalytic activity">
    <reaction>
        <text>L-glutamyl-tRNA(Gln) + L-glutamine + ATP + H2O = L-glutaminyl-tRNA(Gln) + L-glutamate + ADP + phosphate + H(+)</text>
        <dbReference type="Rhea" id="RHEA:17521"/>
        <dbReference type="Rhea" id="RHEA-COMP:9681"/>
        <dbReference type="Rhea" id="RHEA-COMP:9684"/>
        <dbReference type="ChEBI" id="CHEBI:15377"/>
        <dbReference type="ChEBI" id="CHEBI:15378"/>
        <dbReference type="ChEBI" id="CHEBI:29985"/>
        <dbReference type="ChEBI" id="CHEBI:30616"/>
        <dbReference type="ChEBI" id="CHEBI:43474"/>
        <dbReference type="ChEBI" id="CHEBI:58359"/>
        <dbReference type="ChEBI" id="CHEBI:78520"/>
        <dbReference type="ChEBI" id="CHEBI:78521"/>
        <dbReference type="ChEBI" id="CHEBI:456216"/>
    </reaction>
</comment>
<comment type="catalytic activity">
    <reaction>
        <text>L-aspartyl-tRNA(Asn) + L-glutamine + ATP + H2O = L-asparaginyl-tRNA(Asn) + L-glutamate + ADP + phosphate + 2 H(+)</text>
        <dbReference type="Rhea" id="RHEA:14513"/>
        <dbReference type="Rhea" id="RHEA-COMP:9674"/>
        <dbReference type="Rhea" id="RHEA-COMP:9677"/>
        <dbReference type="ChEBI" id="CHEBI:15377"/>
        <dbReference type="ChEBI" id="CHEBI:15378"/>
        <dbReference type="ChEBI" id="CHEBI:29985"/>
        <dbReference type="ChEBI" id="CHEBI:30616"/>
        <dbReference type="ChEBI" id="CHEBI:43474"/>
        <dbReference type="ChEBI" id="CHEBI:58359"/>
        <dbReference type="ChEBI" id="CHEBI:78515"/>
        <dbReference type="ChEBI" id="CHEBI:78516"/>
        <dbReference type="ChEBI" id="CHEBI:456216"/>
    </reaction>
</comment>
<comment type="subunit">
    <text evidence="1">Heterotrimer of A, B and C subunits.</text>
</comment>
<comment type="similarity">
    <text evidence="2">Belongs to the GatB/GatE family. GatB subfamily.</text>
</comment>
<organism>
    <name type="scientific">Chlamydia trachomatis serovar D (strain ATCC VR-885 / DSM 19411 / UW-3/Cx)</name>
    <dbReference type="NCBI Taxonomy" id="272561"/>
    <lineage>
        <taxon>Bacteria</taxon>
        <taxon>Pseudomonadati</taxon>
        <taxon>Chlamydiota</taxon>
        <taxon>Chlamydiia</taxon>
        <taxon>Chlamydiales</taxon>
        <taxon>Chlamydiaceae</taxon>
        <taxon>Chlamydia/Chlamydophila group</taxon>
        <taxon>Chlamydia</taxon>
    </lineage>
</organism>
<sequence>MGIAHTEWESVIGLEVHVELNTESKLFSPARNHFGDEPNTNISPVCTGMPGSLPVLNKDAVRKAVLFGCAVEGDVALFSRFDRKSYFYPDSPRNFQITQYEHPIVRGGCIRAVVEGEEKTFELAQTHLEDDAGMLKHFGDFAGVDYNRAGVPLIEIVSKPCMFSAEDAVAYANALVSILGYIGISDCNMEEGSIRFDVNISVRPRGSRELRNKVEIKNMNSFTFMAQALEAEKRRQIEEYLSYPNEDPKKVVPAATYRWDPEKKKTVLMRLKERAEDYMYFVEPDLPVLQITETYIDEVRQTLPELPHSKYMRYITDFDIAEDLAMILVGDRHTAHFFETATMSCKNYRALSNWITVEFAGRCKARGKTLPFTGILPEWVAQLVNFIDRGVITGKIAKEIADRMVSSFGESPEDILRRHPSLLPMTDDHALRAIVKEVVAQNTASVADYKNGKAKALGFLVGQIMKRTEGKAPPKRVNELLLAAMRDM</sequence>
<evidence type="ECO:0000250" key="1"/>
<evidence type="ECO:0000305" key="2"/>
<protein>
    <recommendedName>
        <fullName>Aspartyl/glutamyl-tRNA(Asn/Gln) amidotransferase subunit B</fullName>
        <shortName>Asp/Glu-ADT subunit B</shortName>
        <ecNumber>6.3.5.-</ecNumber>
    </recommendedName>
</protein>
<gene>
    <name type="primary">gatB</name>
    <name type="ordered locus">CT_004</name>
</gene>
<accession>O84007</accession>
<keyword id="KW-0067">ATP-binding</keyword>
<keyword id="KW-0436">Ligase</keyword>
<keyword id="KW-0547">Nucleotide-binding</keyword>
<keyword id="KW-0648">Protein biosynthesis</keyword>
<keyword id="KW-1185">Reference proteome</keyword>
<reference key="1">
    <citation type="journal article" date="1998" name="Science">
        <title>Genome sequence of an obligate intracellular pathogen of humans: Chlamydia trachomatis.</title>
        <authorList>
            <person name="Stephens R.S."/>
            <person name="Kalman S."/>
            <person name="Lammel C.J."/>
            <person name="Fan J."/>
            <person name="Marathe R."/>
            <person name="Aravind L."/>
            <person name="Mitchell W.P."/>
            <person name="Olinger L."/>
            <person name="Tatusov R.L."/>
            <person name="Zhao Q."/>
            <person name="Koonin E.V."/>
            <person name="Davis R.W."/>
        </authorList>
    </citation>
    <scope>NUCLEOTIDE SEQUENCE [LARGE SCALE GENOMIC DNA]</scope>
    <source>
        <strain>ATCC VR-885 / DSM 19411 / UW-3/Cx</strain>
    </source>
</reference>
<dbReference type="EC" id="6.3.5.-"/>
<dbReference type="EMBL" id="AE001273">
    <property type="protein sequence ID" value="AAC67594.1"/>
    <property type="molecule type" value="Genomic_DNA"/>
</dbReference>
<dbReference type="PIR" id="G71568">
    <property type="entry name" value="G71568"/>
</dbReference>
<dbReference type="RefSeq" id="NP_219506.1">
    <property type="nucleotide sequence ID" value="NC_000117.1"/>
</dbReference>
<dbReference type="RefSeq" id="WP_009871350.1">
    <property type="nucleotide sequence ID" value="NC_000117.1"/>
</dbReference>
<dbReference type="SMR" id="O84007"/>
<dbReference type="FunCoup" id="O84007">
    <property type="interactions" value="259"/>
</dbReference>
<dbReference type="STRING" id="272561.CT_004"/>
<dbReference type="EnsemblBacteria" id="AAC67594">
    <property type="protein sequence ID" value="AAC67594"/>
    <property type="gene ID" value="CT_004"/>
</dbReference>
<dbReference type="GeneID" id="884084"/>
<dbReference type="KEGG" id="ctr:CT_004"/>
<dbReference type="PATRIC" id="fig|272561.5.peg.5"/>
<dbReference type="HOGENOM" id="CLU_019240_0_0_0"/>
<dbReference type="InParanoid" id="O84007"/>
<dbReference type="OrthoDB" id="9804078at2"/>
<dbReference type="Proteomes" id="UP000000431">
    <property type="component" value="Chromosome"/>
</dbReference>
<dbReference type="GO" id="GO:0050566">
    <property type="term" value="F:asparaginyl-tRNA synthase (glutamine-hydrolyzing) activity"/>
    <property type="evidence" value="ECO:0007669"/>
    <property type="project" value="RHEA"/>
</dbReference>
<dbReference type="GO" id="GO:0005524">
    <property type="term" value="F:ATP binding"/>
    <property type="evidence" value="ECO:0007669"/>
    <property type="project" value="UniProtKB-KW"/>
</dbReference>
<dbReference type="GO" id="GO:0050567">
    <property type="term" value="F:glutaminyl-tRNA synthase (glutamine-hydrolyzing) activity"/>
    <property type="evidence" value="ECO:0000318"/>
    <property type="project" value="GO_Central"/>
</dbReference>
<dbReference type="GO" id="GO:0070681">
    <property type="term" value="P:glutaminyl-tRNAGln biosynthesis via transamidation"/>
    <property type="evidence" value="ECO:0000318"/>
    <property type="project" value="GO_Central"/>
</dbReference>
<dbReference type="GO" id="GO:0006412">
    <property type="term" value="P:translation"/>
    <property type="evidence" value="ECO:0007669"/>
    <property type="project" value="UniProtKB-UniRule"/>
</dbReference>
<dbReference type="FunFam" id="1.10.10.410:FF:000001">
    <property type="entry name" value="Aspartyl/glutamyl-tRNA(Asn/Gln) amidotransferase subunit B"/>
    <property type="match status" value="1"/>
</dbReference>
<dbReference type="Gene3D" id="1.10.10.410">
    <property type="match status" value="1"/>
</dbReference>
<dbReference type="Gene3D" id="1.10.150.380">
    <property type="entry name" value="GatB domain, N-terminal subdomain"/>
    <property type="match status" value="1"/>
</dbReference>
<dbReference type="HAMAP" id="MF_00121">
    <property type="entry name" value="GatB"/>
    <property type="match status" value="1"/>
</dbReference>
<dbReference type="InterPro" id="IPR017959">
    <property type="entry name" value="Asn/Gln-tRNA_amidoTrfase_suB/E"/>
</dbReference>
<dbReference type="InterPro" id="IPR006075">
    <property type="entry name" value="Asn/Gln-tRNA_Trfase_suB/E_cat"/>
</dbReference>
<dbReference type="InterPro" id="IPR018027">
    <property type="entry name" value="Asn/Gln_amidotransferase"/>
</dbReference>
<dbReference type="InterPro" id="IPR003789">
    <property type="entry name" value="Asn/Gln_tRNA_amidoTrase-B-like"/>
</dbReference>
<dbReference type="InterPro" id="IPR004413">
    <property type="entry name" value="GatB"/>
</dbReference>
<dbReference type="InterPro" id="IPR042114">
    <property type="entry name" value="GatB_C_1"/>
</dbReference>
<dbReference type="InterPro" id="IPR023168">
    <property type="entry name" value="GatB_Yqey_C_2"/>
</dbReference>
<dbReference type="InterPro" id="IPR017958">
    <property type="entry name" value="Gln-tRNA_amidoTrfase_suB_CS"/>
</dbReference>
<dbReference type="InterPro" id="IPR014746">
    <property type="entry name" value="Gln_synth/guanido_kin_cat_dom"/>
</dbReference>
<dbReference type="NCBIfam" id="TIGR00133">
    <property type="entry name" value="gatB"/>
    <property type="match status" value="1"/>
</dbReference>
<dbReference type="NCBIfam" id="NF004012">
    <property type="entry name" value="PRK05477.1-2"/>
    <property type="match status" value="1"/>
</dbReference>
<dbReference type="NCBIfam" id="NF004014">
    <property type="entry name" value="PRK05477.1-4"/>
    <property type="match status" value="1"/>
</dbReference>
<dbReference type="PANTHER" id="PTHR11659">
    <property type="entry name" value="GLUTAMYL-TRNA GLN AMIDOTRANSFERASE SUBUNIT B MITOCHONDRIAL AND PROKARYOTIC PET112-RELATED"/>
    <property type="match status" value="1"/>
</dbReference>
<dbReference type="PANTHER" id="PTHR11659:SF0">
    <property type="entry name" value="GLUTAMYL-TRNA(GLN) AMIDOTRANSFERASE SUBUNIT B, MITOCHONDRIAL"/>
    <property type="match status" value="1"/>
</dbReference>
<dbReference type="Pfam" id="PF02934">
    <property type="entry name" value="GatB_N"/>
    <property type="match status" value="1"/>
</dbReference>
<dbReference type="Pfam" id="PF02637">
    <property type="entry name" value="GatB_Yqey"/>
    <property type="match status" value="1"/>
</dbReference>
<dbReference type="SMART" id="SM00845">
    <property type="entry name" value="GatB_Yqey"/>
    <property type="match status" value="1"/>
</dbReference>
<dbReference type="SUPFAM" id="SSF89095">
    <property type="entry name" value="GatB/YqeY motif"/>
    <property type="match status" value="1"/>
</dbReference>
<dbReference type="SUPFAM" id="SSF55931">
    <property type="entry name" value="Glutamine synthetase/guanido kinase"/>
    <property type="match status" value="1"/>
</dbReference>
<dbReference type="PROSITE" id="PS01234">
    <property type="entry name" value="GATB"/>
    <property type="match status" value="1"/>
</dbReference>
<proteinExistence type="inferred from homology"/>